<sequence>MFLVYLRNCMDFFFNSSFNYSLTSIDFYKTIFLIFANKIKNNFLYIISFQWFFNITYIINQLPSIDDELYIPIVRDFFNFNSLITYIYNISLTQIFSIFSFSAIHVYFIKRLYSENLTSILPALSGYFISEILFIICIYSGITNLFIILANWERFFIISGIIFFFYEGVNFIKENKNKNIYLKIPFIKHSTFFNSYRFFNFKEFFLGVFLFCLDSPSIFTLVSNLSLTPTVSNFEFFINSSFIQLVLFILIRSFFFYLSFIIIYPFILNKIHHNTYFQSDTLKKINIFIQKGFGMLLIFFSVSSIPFYTIEYFLGYLLGIIPKDISLFFTQLDPYFLSDSPGFYEQFYYGNTVVPFKAAKFDRGRYLLYPAYRELPPSYEDFIFKPIYLEWTKTLKSNNYIDRYLGSQKTTMQYIQTKATPIIKFFENLFPDANVRKSNKRKKILTQLLTDKFLGSHTKLNTYFNVPYAEKLLFFNRLSKSAFRINNKQYYNDLILSSIEEFVTFNENLIPNFETLTPFDKCTYRFSLSKNLLTSRLKPFVDFLDLFSAPEFDITPIYVKMAENILSTYDRKKFFAPLANFFKDETLNESKVKKKNAQPSLSREIEAIQGKIPLESILTEGIVALFPEWAYIKMELVGKLGSIIKEYQRYFNFLEIFNLYLRGHSFKLTVKQSIDLHYRQLYQTEAISYLRHYFNNNSYRKIRDDLDNFSKVLKINFIENTKNKTNKIKNLNTREDSKKLLISLEKDSKKFMKYLLFKTTRSFASKVYNHQFKGTLIDLIQWFSYSPYTSSMFKEINTKEMENVFIEAEEPSYLLSLNNDVKKYYPIIKYDQAFYKKDALDKGIIFDHILYKSLIEELYDDDLTLENSESLKNENKLSKKNLSLINSNIISPNQNIFDLLNMIIDYITITNYSLSKIDTLLNPFIEYMSFEPLCASNHNNLFVLSTAHYSINDIDLPVKNHNTNKWPLPSNILDYLVYNISDDKVSFKNPLAYIGMFLQIPYEKFGIDYKNTYIFKVDNYEELNEHEVFDQYMDFFARYEDPAYESLQLKFINLFLENSLDDTNKALCKNYLFSKNFMVPTAYIDCPFPILQHFYLAKNLRQLFFVRSPIRGGYKWAGSYTNNIINNKLYTDLLKIYNRIILLWHKIYTSIIYKFKRNNHGTLAQLVE</sequence>
<comment type="subcellular location">
    <subcellularLocation>
        <location evidence="2">Plastid membrane</location>
        <topology evidence="2">Multi-pass membrane protein</topology>
    </subcellularLocation>
</comment>
<comment type="similarity">
    <text evidence="2">Belongs to the ycf78 family.</text>
</comment>
<proteinExistence type="inferred from homology"/>
<name>YCF78_HELSJ</name>
<geneLocation type="non-photosynthetic plastid"/>
<organism>
    <name type="scientific">Helicosporidium sp. subsp. Simulium jonesii</name>
    <name type="common">Green alga</name>
    <dbReference type="NCBI Taxonomy" id="145475"/>
    <lineage>
        <taxon>Eukaryota</taxon>
        <taxon>Viridiplantae</taxon>
        <taxon>Chlorophyta</taxon>
        <taxon>core chlorophytes</taxon>
        <taxon>Trebouxiophyceae</taxon>
        <taxon>Chlorellales</taxon>
        <taxon>Chlorellaceae</taxon>
        <taxon>Helicosporidium</taxon>
    </lineage>
</organism>
<reference key="1">
    <citation type="journal article" date="2006" name="BMC Biol.">
        <title>The complete plastid genome sequence of the parasitic green alga, Helicosporidium sp. is highly reduced and structured.</title>
        <authorList>
            <person name="de Koning A.P."/>
            <person name="Keeling P.J."/>
        </authorList>
    </citation>
    <scope>NUCLEOTIDE SEQUENCE [LARGE SCALE GENOMIC DNA]</scope>
</reference>
<gene>
    <name type="primary">ycf78</name>
    <name type="synonym">ycf1</name>
</gene>
<accession>Q2EEX5</accession>
<dbReference type="EMBL" id="DQ398104">
    <property type="protein sequence ID" value="ABD33989.1"/>
    <property type="molecule type" value="Genomic_DNA"/>
</dbReference>
<dbReference type="RefSeq" id="YP_635919.1">
    <property type="nucleotide sequence ID" value="NC_008100.1"/>
</dbReference>
<dbReference type="GeneID" id="4100437"/>
<dbReference type="GO" id="GO:0042170">
    <property type="term" value="C:plastid membrane"/>
    <property type="evidence" value="ECO:0007669"/>
    <property type="project" value="UniProtKB-SubCell"/>
</dbReference>
<evidence type="ECO:0000255" key="1"/>
<evidence type="ECO:0000305" key="2"/>
<keyword id="KW-0472">Membrane</keyword>
<keyword id="KW-0934">Plastid</keyword>
<keyword id="KW-0812">Transmembrane</keyword>
<keyword id="KW-1133">Transmembrane helix</keyword>
<protein>
    <recommendedName>
        <fullName>Uncharacterized membrane protein ycf78</fullName>
    </recommendedName>
    <alternativeName>
        <fullName>ycf1</fullName>
    </alternativeName>
</protein>
<feature type="chain" id="PRO_0000293980" description="Uncharacterized membrane protein ycf78">
    <location>
        <begin position="1"/>
        <end position="1168"/>
    </location>
</feature>
<feature type="transmembrane region" description="Helical" evidence="1">
    <location>
        <begin position="43"/>
        <end position="63"/>
    </location>
</feature>
<feature type="transmembrane region" description="Helical" evidence="1">
    <location>
        <begin position="89"/>
        <end position="109"/>
    </location>
</feature>
<feature type="transmembrane region" description="Helical" evidence="1">
    <location>
        <begin position="132"/>
        <end position="152"/>
    </location>
</feature>
<feature type="transmembrane region" description="Helical" evidence="1">
    <location>
        <begin position="155"/>
        <end position="175"/>
    </location>
</feature>
<feature type="transmembrane region" description="Helical" evidence="1">
    <location>
        <begin position="203"/>
        <end position="223"/>
    </location>
</feature>
<feature type="transmembrane region" description="Helical" evidence="1">
    <location>
        <begin position="247"/>
        <end position="267"/>
    </location>
</feature>
<feature type="transmembrane region" description="Helical" evidence="1">
    <location>
        <begin position="293"/>
        <end position="313"/>
    </location>
</feature>